<proteinExistence type="inferred from homology"/>
<accession>O74327</accession>
<gene>
    <name type="primary">avt5</name>
    <name type="synonym">avt8</name>
    <name type="ORF">SPBC1685.07c</name>
</gene>
<keyword id="KW-0029">Amino-acid transport</keyword>
<keyword id="KW-0472">Membrane</keyword>
<keyword id="KW-1185">Reference proteome</keyword>
<keyword id="KW-0749">Sporulation</keyword>
<keyword id="KW-0812">Transmembrane</keyword>
<keyword id="KW-1133">Transmembrane helix</keyword>
<keyword id="KW-0813">Transport</keyword>
<keyword id="KW-0926">Vacuole</keyword>
<comment type="function">
    <text evidence="2 3">Vacuolar amino acid transporter involved in the vacuolar uptake of histidine, glutamate, tyrosine, arginine, lysine, and serine. Required for sporulation.</text>
</comment>
<comment type="subcellular location">
    <subcellularLocation>
        <location evidence="3">Vacuole membrane</location>
        <topology evidence="3">Multi-pass membrane protein</topology>
    </subcellularLocation>
</comment>
<comment type="similarity">
    <text evidence="4">Belongs to the amino acid/polyamine transporter 2 family.</text>
</comment>
<name>AVT5_SCHPO</name>
<organism>
    <name type="scientific">Schizosaccharomyces pombe (strain 972 / ATCC 24843)</name>
    <name type="common">Fission yeast</name>
    <dbReference type="NCBI Taxonomy" id="284812"/>
    <lineage>
        <taxon>Eukaryota</taxon>
        <taxon>Fungi</taxon>
        <taxon>Dikarya</taxon>
        <taxon>Ascomycota</taxon>
        <taxon>Taphrinomycotina</taxon>
        <taxon>Schizosaccharomycetes</taxon>
        <taxon>Schizosaccharomycetales</taxon>
        <taxon>Schizosaccharomycetaceae</taxon>
        <taxon>Schizosaccharomyces</taxon>
    </lineage>
</organism>
<feature type="chain" id="PRO_0000316193" description="Vacuolar amino acid transporter 5">
    <location>
        <begin position="1"/>
        <end position="420"/>
    </location>
</feature>
<feature type="topological domain" description="Cytoplasmic" evidence="1">
    <location>
        <begin position="1"/>
        <end position="19"/>
    </location>
</feature>
<feature type="transmembrane region" description="Helical" evidence="1">
    <location>
        <begin position="20"/>
        <end position="40"/>
    </location>
</feature>
<feature type="topological domain" description="Vacuolar" evidence="1">
    <location>
        <begin position="41"/>
        <end position="49"/>
    </location>
</feature>
<feature type="transmembrane region" description="Helical" evidence="1">
    <location>
        <begin position="50"/>
        <end position="70"/>
    </location>
</feature>
<feature type="topological domain" description="Cytoplasmic" evidence="1">
    <location>
        <begin position="71"/>
        <end position="96"/>
    </location>
</feature>
<feature type="transmembrane region" description="Helical" evidence="1">
    <location>
        <begin position="97"/>
        <end position="117"/>
    </location>
</feature>
<feature type="topological domain" description="Vacuolar" evidence="1">
    <location>
        <begin position="118"/>
        <end position="141"/>
    </location>
</feature>
<feature type="transmembrane region" description="Helical" evidence="1">
    <location>
        <begin position="142"/>
        <end position="162"/>
    </location>
</feature>
<feature type="topological domain" description="Cytoplasmic" evidence="1">
    <location>
        <begin position="163"/>
        <end position="166"/>
    </location>
</feature>
<feature type="transmembrane region" description="Helical" evidence="1">
    <location>
        <begin position="167"/>
        <end position="187"/>
    </location>
</feature>
<feature type="topological domain" description="Vacuolar" evidence="1">
    <location>
        <begin position="188"/>
        <end position="195"/>
    </location>
</feature>
<feature type="transmembrane region" description="Helical" evidence="1">
    <location>
        <begin position="196"/>
        <end position="216"/>
    </location>
</feature>
<feature type="topological domain" description="Cytoplasmic" evidence="1">
    <location>
        <begin position="217"/>
        <end position="240"/>
    </location>
</feature>
<feature type="transmembrane region" description="Helical" evidence="1">
    <location>
        <begin position="241"/>
        <end position="261"/>
    </location>
</feature>
<feature type="topological domain" description="Vacuolar" evidence="1">
    <location>
        <begin position="262"/>
        <end position="278"/>
    </location>
</feature>
<feature type="transmembrane region" description="Helical" evidence="1">
    <location>
        <begin position="279"/>
        <end position="299"/>
    </location>
</feature>
<feature type="topological domain" description="Cytoplasmic" evidence="1">
    <location>
        <begin position="300"/>
        <end position="326"/>
    </location>
</feature>
<feature type="transmembrane region" description="Helical" evidence="1">
    <location>
        <begin position="327"/>
        <end position="347"/>
    </location>
</feature>
<feature type="topological domain" description="Vacuolar" evidence="1">
    <location>
        <begin position="348"/>
        <end position="349"/>
    </location>
</feature>
<feature type="transmembrane region" description="Helical" evidence="1">
    <location>
        <begin position="350"/>
        <end position="370"/>
    </location>
</feature>
<feature type="topological domain" description="Cytoplasmic" evidence="1">
    <location>
        <begin position="371"/>
        <end position="394"/>
    </location>
</feature>
<feature type="transmembrane region" description="Helical" evidence="1">
    <location>
        <begin position="395"/>
        <end position="415"/>
    </location>
</feature>
<feature type="topological domain" description="Vacuolar" evidence="1">
    <location>
        <begin position="416"/>
        <end position="420"/>
    </location>
</feature>
<dbReference type="EMBL" id="CU329671">
    <property type="protein sequence ID" value="CAA20055.1"/>
    <property type="molecule type" value="Genomic_DNA"/>
</dbReference>
<dbReference type="PIR" id="T39523">
    <property type="entry name" value="T39523"/>
</dbReference>
<dbReference type="RefSeq" id="NP_595211.1">
    <property type="nucleotide sequence ID" value="NM_001021118.2"/>
</dbReference>
<dbReference type="SMR" id="O74327"/>
<dbReference type="BioGRID" id="276619">
    <property type="interactions" value="2"/>
</dbReference>
<dbReference type="FunCoup" id="O74327">
    <property type="interactions" value="315"/>
</dbReference>
<dbReference type="STRING" id="284812.O74327"/>
<dbReference type="iPTMnet" id="O74327"/>
<dbReference type="PaxDb" id="4896-SPBC1685.07c.1"/>
<dbReference type="EnsemblFungi" id="SPBC1685.07c.1">
    <property type="protein sequence ID" value="SPBC1685.07c.1:pep"/>
    <property type="gene ID" value="SPBC1685.07c"/>
</dbReference>
<dbReference type="GeneID" id="2540081"/>
<dbReference type="KEGG" id="spo:2540081"/>
<dbReference type="PomBase" id="SPBC1685.07c">
    <property type="gene designation" value="avt5"/>
</dbReference>
<dbReference type="VEuPathDB" id="FungiDB:SPBC1685.07c"/>
<dbReference type="eggNOG" id="KOG1305">
    <property type="taxonomic scope" value="Eukaryota"/>
</dbReference>
<dbReference type="HOGENOM" id="CLU_009020_1_1_1"/>
<dbReference type="InParanoid" id="O74327"/>
<dbReference type="OMA" id="DSIHHQR"/>
<dbReference type="PhylomeDB" id="O74327"/>
<dbReference type="PRO" id="PR:O74327"/>
<dbReference type="Proteomes" id="UP000002485">
    <property type="component" value="Chromosome II"/>
</dbReference>
<dbReference type="GO" id="GO:0000329">
    <property type="term" value="C:fungal-type vacuole membrane"/>
    <property type="evidence" value="ECO:0000314"/>
    <property type="project" value="PomBase"/>
</dbReference>
<dbReference type="GO" id="GO:0061459">
    <property type="term" value="F:L-arginine transmembrane transporter activity"/>
    <property type="evidence" value="ECO:0000315"/>
    <property type="project" value="PomBase"/>
</dbReference>
<dbReference type="GO" id="GO:0005313">
    <property type="term" value="F:L-glutamate transmembrane transporter activity"/>
    <property type="evidence" value="ECO:0000315"/>
    <property type="project" value="PomBase"/>
</dbReference>
<dbReference type="GO" id="GO:0005290">
    <property type="term" value="F:L-histidine transmembrane transporter activity"/>
    <property type="evidence" value="ECO:0000315"/>
    <property type="project" value="PomBase"/>
</dbReference>
<dbReference type="GO" id="GO:0015189">
    <property type="term" value="F:L-lysine transmembrane transporter activity"/>
    <property type="evidence" value="ECO:0000315"/>
    <property type="project" value="PomBase"/>
</dbReference>
<dbReference type="GO" id="GO:0015194">
    <property type="term" value="F:L-serine transmembrane transporter activity"/>
    <property type="evidence" value="ECO:0000315"/>
    <property type="project" value="PomBase"/>
</dbReference>
<dbReference type="GO" id="GO:0005302">
    <property type="term" value="F:L-tyrosine transmembrane transporter activity"/>
    <property type="evidence" value="ECO:0000315"/>
    <property type="project" value="PomBase"/>
</dbReference>
<dbReference type="GO" id="GO:0032975">
    <property type="term" value="P:amino acid transmembrane import into vacuole"/>
    <property type="evidence" value="ECO:0000315"/>
    <property type="project" value="PomBase"/>
</dbReference>
<dbReference type="GO" id="GO:0003333">
    <property type="term" value="P:amino acid transmembrane transport"/>
    <property type="evidence" value="ECO:0000318"/>
    <property type="project" value="GO_Central"/>
</dbReference>
<dbReference type="GO" id="GO:0090518">
    <property type="term" value="P:L-arginine transmembrane import into vacuole"/>
    <property type="evidence" value="ECO:0000315"/>
    <property type="project" value="PomBase"/>
</dbReference>
<dbReference type="GO" id="GO:1901481">
    <property type="term" value="P:L-glutamate import involved in cellular response to nitrogen starvation"/>
    <property type="evidence" value="ECO:0000315"/>
    <property type="project" value="PomBase"/>
</dbReference>
<dbReference type="GO" id="GO:0090515">
    <property type="term" value="P:L-glutamate transmembrane import into vacuole"/>
    <property type="evidence" value="ECO:0000315"/>
    <property type="project" value="PomBase"/>
</dbReference>
<dbReference type="GO" id="GO:0090513">
    <property type="term" value="P:L-histidine transmembrane import into vacuole"/>
    <property type="evidence" value="ECO:0000315"/>
    <property type="project" value="PomBase"/>
</dbReference>
<dbReference type="GO" id="GO:1901482">
    <property type="term" value="P:L-lysine import into vacuole involved in cellular response to nitrogen starvation"/>
    <property type="evidence" value="ECO:0000315"/>
    <property type="project" value="PomBase"/>
</dbReference>
<dbReference type="GO" id="GO:0090517">
    <property type="term" value="P:L-lysine transmembrane import into vacuole"/>
    <property type="evidence" value="ECO:0000315"/>
    <property type="project" value="PomBase"/>
</dbReference>
<dbReference type="GO" id="GO:0090516">
    <property type="term" value="P:L-serine transmembrane import into vacuole"/>
    <property type="evidence" value="ECO:0000315"/>
    <property type="project" value="PomBase"/>
</dbReference>
<dbReference type="GO" id="GO:0090514">
    <property type="term" value="P:L-tyrosine transmembrane import into vacuole"/>
    <property type="evidence" value="ECO:0000315"/>
    <property type="project" value="PomBase"/>
</dbReference>
<dbReference type="GO" id="GO:0030435">
    <property type="term" value="P:sporulation resulting in formation of a cellular spore"/>
    <property type="evidence" value="ECO:0007669"/>
    <property type="project" value="UniProtKB-KW"/>
</dbReference>
<dbReference type="InterPro" id="IPR013057">
    <property type="entry name" value="AA_transpt_TM"/>
</dbReference>
<dbReference type="PANTHER" id="PTHR22950">
    <property type="entry name" value="AMINO ACID TRANSPORTER"/>
    <property type="match status" value="1"/>
</dbReference>
<dbReference type="PANTHER" id="PTHR22950:SF678">
    <property type="entry name" value="VACUOLAR AMINO ACID TRANSPORTER 5-RELATED"/>
    <property type="match status" value="1"/>
</dbReference>
<dbReference type="Pfam" id="PF01490">
    <property type="entry name" value="Aa_trans"/>
    <property type="match status" value="1"/>
</dbReference>
<reference key="1">
    <citation type="journal article" date="2002" name="Nature">
        <title>The genome sequence of Schizosaccharomyces pombe.</title>
        <authorList>
            <person name="Wood V."/>
            <person name="Gwilliam R."/>
            <person name="Rajandream M.A."/>
            <person name="Lyne M.H."/>
            <person name="Lyne R."/>
            <person name="Stewart A."/>
            <person name="Sgouros J.G."/>
            <person name="Peat N."/>
            <person name="Hayles J."/>
            <person name="Baker S.G."/>
            <person name="Basham D."/>
            <person name="Bowman S."/>
            <person name="Brooks K."/>
            <person name="Brown D."/>
            <person name="Brown S."/>
            <person name="Chillingworth T."/>
            <person name="Churcher C.M."/>
            <person name="Collins M."/>
            <person name="Connor R."/>
            <person name="Cronin A."/>
            <person name="Davis P."/>
            <person name="Feltwell T."/>
            <person name="Fraser A."/>
            <person name="Gentles S."/>
            <person name="Goble A."/>
            <person name="Hamlin N."/>
            <person name="Harris D.E."/>
            <person name="Hidalgo J."/>
            <person name="Hodgson G."/>
            <person name="Holroyd S."/>
            <person name="Hornsby T."/>
            <person name="Howarth S."/>
            <person name="Huckle E.J."/>
            <person name="Hunt S."/>
            <person name="Jagels K."/>
            <person name="James K.D."/>
            <person name="Jones L."/>
            <person name="Jones M."/>
            <person name="Leather S."/>
            <person name="McDonald S."/>
            <person name="McLean J."/>
            <person name="Mooney P."/>
            <person name="Moule S."/>
            <person name="Mungall K.L."/>
            <person name="Murphy L.D."/>
            <person name="Niblett D."/>
            <person name="Odell C."/>
            <person name="Oliver K."/>
            <person name="O'Neil S."/>
            <person name="Pearson D."/>
            <person name="Quail M.A."/>
            <person name="Rabbinowitsch E."/>
            <person name="Rutherford K.M."/>
            <person name="Rutter S."/>
            <person name="Saunders D."/>
            <person name="Seeger K."/>
            <person name="Sharp S."/>
            <person name="Skelton J."/>
            <person name="Simmonds M.N."/>
            <person name="Squares R."/>
            <person name="Squares S."/>
            <person name="Stevens K."/>
            <person name="Taylor K."/>
            <person name="Taylor R.G."/>
            <person name="Tivey A."/>
            <person name="Walsh S.V."/>
            <person name="Warren T."/>
            <person name="Whitehead S."/>
            <person name="Woodward J.R."/>
            <person name="Volckaert G."/>
            <person name="Aert R."/>
            <person name="Robben J."/>
            <person name="Grymonprez B."/>
            <person name="Weltjens I."/>
            <person name="Vanstreels E."/>
            <person name="Rieger M."/>
            <person name="Schaefer M."/>
            <person name="Mueller-Auer S."/>
            <person name="Gabel C."/>
            <person name="Fuchs M."/>
            <person name="Duesterhoeft A."/>
            <person name="Fritzc C."/>
            <person name="Holzer E."/>
            <person name="Moestl D."/>
            <person name="Hilbert H."/>
            <person name="Borzym K."/>
            <person name="Langer I."/>
            <person name="Beck A."/>
            <person name="Lehrach H."/>
            <person name="Reinhardt R."/>
            <person name="Pohl T.M."/>
            <person name="Eger P."/>
            <person name="Zimmermann W."/>
            <person name="Wedler H."/>
            <person name="Wambutt R."/>
            <person name="Purnelle B."/>
            <person name="Goffeau A."/>
            <person name="Cadieu E."/>
            <person name="Dreano S."/>
            <person name="Gloux S."/>
            <person name="Lelaure V."/>
            <person name="Mottier S."/>
            <person name="Galibert F."/>
            <person name="Aves S.J."/>
            <person name="Xiang Z."/>
            <person name="Hunt C."/>
            <person name="Moore K."/>
            <person name="Hurst S.M."/>
            <person name="Lucas M."/>
            <person name="Rochet M."/>
            <person name="Gaillardin C."/>
            <person name="Tallada V.A."/>
            <person name="Garzon A."/>
            <person name="Thode G."/>
            <person name="Daga R.R."/>
            <person name="Cruzado L."/>
            <person name="Jimenez J."/>
            <person name="Sanchez M."/>
            <person name="del Rey F."/>
            <person name="Benito J."/>
            <person name="Dominguez A."/>
            <person name="Revuelta J.L."/>
            <person name="Moreno S."/>
            <person name="Armstrong J."/>
            <person name="Forsburg S.L."/>
            <person name="Cerutti L."/>
            <person name="Lowe T."/>
            <person name="McCombie W.R."/>
            <person name="Paulsen I."/>
            <person name="Potashkin J."/>
            <person name="Shpakovski G.V."/>
            <person name="Ussery D."/>
            <person name="Barrell B.G."/>
            <person name="Nurse P."/>
        </authorList>
    </citation>
    <scope>NUCLEOTIDE SEQUENCE [LARGE SCALE GENOMIC DNA]</scope>
    <source>
        <strain>972 / ATCC 24843</strain>
    </source>
</reference>
<reference key="2">
    <citation type="journal article" date="2009" name="Microbiology">
        <title>Autophagy-deficient Schizosaccharomyces pombe mutants undergo partial sporulation during nitrogen starvation.</title>
        <authorList>
            <person name="Mukaiyama H."/>
            <person name="Kajiwara S."/>
            <person name="Hosomi A."/>
            <person name="Giga-Hama Y."/>
            <person name="Tanaka N."/>
            <person name="Nakamura T."/>
            <person name="Takegawa K."/>
        </authorList>
    </citation>
    <scope>FUNCTION</scope>
</reference>
<reference key="3">
    <citation type="journal article" date="2010" name="FEBS Lett.">
        <title>Avt5p is required for vacuolar uptake of amino acids in the fission yeast Schizosaccharomyces pombe.</title>
        <authorList>
            <person name="Chardwiriyapreecha S."/>
            <person name="Mukaiyama H."/>
            <person name="Sekito T."/>
            <person name="Iwaki T."/>
            <person name="Takegawa K."/>
            <person name="Kakinuma Y."/>
        </authorList>
    </citation>
    <scope>FUNCTION</scope>
    <scope>SUBCELLULAR LOCATION</scope>
</reference>
<sequence>MSGYSPLSSGPADVHIGKAGFFSSVINLANTILGAGILSLPNAFTKTGLLFGCLTIVFSAFASFLGLYFVSQCAARLPRGKASFAAVAKHTFPSLAVVFDASIAVKCFGVAVSYLVIVGDLMPQIAPSLGLSSPMFLRRQTWIVFALFVLTPLSFLKRLDSLRHTSVISLIALCYLVFIVLYHFIIGDTVKGEIRYFVPESGFGYLSVLPVFVFGFTCHQNAFSVINEVRNFSQGFVNFTMFTAIISSTLLYLLVAITGYLSFGSLASGNIIAMYDNTSIWIIGGKLAIVVLVLFSYPLQCHPCRNSVYQAIRRSYSAHDMSDGYHAVITLCILLFTHSLALLLSSLEMVLAFVGSTGSTFISFILPGSLYYFFSHKVASPGNSSPLQLRISRAFAAGLAIYGTVVMILCLNINIAKLSH</sequence>
<protein>
    <recommendedName>
        <fullName>Vacuolar amino acid transporter 5</fullName>
    </recommendedName>
</protein>
<evidence type="ECO:0000255" key="1"/>
<evidence type="ECO:0000269" key="2">
    <source>
    </source>
</evidence>
<evidence type="ECO:0000269" key="3">
    <source>
    </source>
</evidence>
<evidence type="ECO:0000305" key="4"/>